<keyword id="KW-0997">Cell inner membrane</keyword>
<keyword id="KW-1003">Cell membrane</keyword>
<keyword id="KW-0350">Heme biosynthesis</keyword>
<keyword id="KW-0472">Membrane</keyword>
<keyword id="KW-0808">Transferase</keyword>
<keyword id="KW-0812">Transmembrane</keyword>
<keyword id="KW-1133">Transmembrane helix</keyword>
<feature type="chain" id="PRO_0000326900" description="Protoheme IX farnesyltransferase">
    <location>
        <begin position="1"/>
        <end position="282"/>
    </location>
</feature>
<feature type="transmembrane region" description="Helical" evidence="1">
    <location>
        <begin position="9"/>
        <end position="29"/>
    </location>
</feature>
<feature type="transmembrane region" description="Helical" evidence="1">
    <location>
        <begin position="39"/>
        <end position="59"/>
    </location>
</feature>
<feature type="transmembrane region" description="Helical" evidence="1">
    <location>
        <begin position="79"/>
        <end position="99"/>
    </location>
</feature>
<feature type="transmembrane region" description="Helical" evidence="1">
    <location>
        <begin position="102"/>
        <end position="122"/>
    </location>
</feature>
<feature type="transmembrane region" description="Helical" evidence="1">
    <location>
        <begin position="139"/>
        <end position="159"/>
    </location>
</feature>
<feature type="transmembrane region" description="Helical" evidence="1">
    <location>
        <begin position="165"/>
        <end position="185"/>
    </location>
</feature>
<feature type="transmembrane region" description="Helical" evidence="1">
    <location>
        <begin position="210"/>
        <end position="230"/>
    </location>
</feature>
<feature type="transmembrane region" description="Helical" evidence="1">
    <location>
        <begin position="231"/>
        <end position="251"/>
    </location>
</feature>
<feature type="transmembrane region" description="Helical" evidence="1">
    <location>
        <begin position="261"/>
        <end position="281"/>
    </location>
</feature>
<name>CYOE_FRAT1</name>
<reference key="1">
    <citation type="journal article" date="2007" name="PLoS ONE">
        <title>Genome sequencing shows that European isolates of Francisella tularensis subspecies tularensis are almost identical to US laboratory strain Schu S4.</title>
        <authorList>
            <person name="Chaudhuri R.R."/>
            <person name="Ren C.-P."/>
            <person name="Desmond L."/>
            <person name="Vincent G.A."/>
            <person name="Silman N.J."/>
            <person name="Brehm J.K."/>
            <person name="Elmore M.J."/>
            <person name="Hudson M.J."/>
            <person name="Forsman M."/>
            <person name="Isherwood K.E."/>
            <person name="Gurycova D."/>
            <person name="Minton N.P."/>
            <person name="Titball R.W."/>
            <person name="Pallen M.J."/>
            <person name="Vipond R."/>
        </authorList>
    </citation>
    <scope>NUCLEOTIDE SEQUENCE [LARGE SCALE GENOMIC DNA]</scope>
    <source>
        <strain>FSC 198</strain>
    </source>
</reference>
<dbReference type="EC" id="2.5.1.141" evidence="1"/>
<dbReference type="EMBL" id="AM286280">
    <property type="protein sequence ID" value="CAL08301.1"/>
    <property type="molecule type" value="Genomic_DNA"/>
</dbReference>
<dbReference type="RefSeq" id="WP_003021678.1">
    <property type="nucleotide sequence ID" value="NC_008245.1"/>
</dbReference>
<dbReference type="SMR" id="Q14JF9"/>
<dbReference type="KEGG" id="ftf:FTF0285"/>
<dbReference type="HOGENOM" id="CLU_029631_0_0_6"/>
<dbReference type="UniPathway" id="UPA00834">
    <property type="reaction ID" value="UER00712"/>
</dbReference>
<dbReference type="GO" id="GO:0005886">
    <property type="term" value="C:plasma membrane"/>
    <property type="evidence" value="ECO:0007669"/>
    <property type="project" value="UniProtKB-SubCell"/>
</dbReference>
<dbReference type="GO" id="GO:0008495">
    <property type="term" value="F:protoheme IX farnesyltransferase activity"/>
    <property type="evidence" value="ECO:0007669"/>
    <property type="project" value="UniProtKB-UniRule"/>
</dbReference>
<dbReference type="GO" id="GO:0048034">
    <property type="term" value="P:heme O biosynthetic process"/>
    <property type="evidence" value="ECO:0007669"/>
    <property type="project" value="UniProtKB-UniRule"/>
</dbReference>
<dbReference type="CDD" id="cd13957">
    <property type="entry name" value="PT_UbiA_Cox10"/>
    <property type="match status" value="1"/>
</dbReference>
<dbReference type="Gene3D" id="1.10.357.140">
    <property type="entry name" value="UbiA prenyltransferase"/>
    <property type="match status" value="1"/>
</dbReference>
<dbReference type="HAMAP" id="MF_00154">
    <property type="entry name" value="CyoE_CtaB"/>
    <property type="match status" value="1"/>
</dbReference>
<dbReference type="InterPro" id="IPR006369">
    <property type="entry name" value="Protohaem_IX_farnesylTrfase"/>
</dbReference>
<dbReference type="InterPro" id="IPR000537">
    <property type="entry name" value="UbiA_prenyltransferase"/>
</dbReference>
<dbReference type="InterPro" id="IPR030470">
    <property type="entry name" value="UbiA_prenylTrfase_CS"/>
</dbReference>
<dbReference type="InterPro" id="IPR044878">
    <property type="entry name" value="UbiA_sf"/>
</dbReference>
<dbReference type="NCBIfam" id="TIGR01473">
    <property type="entry name" value="cyoE_ctaB"/>
    <property type="match status" value="1"/>
</dbReference>
<dbReference type="NCBIfam" id="NF003348">
    <property type="entry name" value="PRK04375.1-1"/>
    <property type="match status" value="1"/>
</dbReference>
<dbReference type="PANTHER" id="PTHR43448">
    <property type="entry name" value="PROTOHEME IX FARNESYLTRANSFERASE, MITOCHONDRIAL"/>
    <property type="match status" value="1"/>
</dbReference>
<dbReference type="PANTHER" id="PTHR43448:SF2">
    <property type="entry name" value="PROTOHEME IX FARNESYLTRANSFERASE, MITOCHONDRIAL"/>
    <property type="match status" value="1"/>
</dbReference>
<dbReference type="Pfam" id="PF01040">
    <property type="entry name" value="UbiA"/>
    <property type="match status" value="1"/>
</dbReference>
<dbReference type="PROSITE" id="PS00943">
    <property type="entry name" value="UBIA"/>
    <property type="match status" value="1"/>
</dbReference>
<accession>Q14JF9</accession>
<sequence length="282" mass="31570">MYFKRYLQLAKPGIIFGNLITLTGGFLLATHREIGFEYLPLFVYVMIGVALMIAAGCVFNNIYDKDIDSSMTRTQNRPLVTGDISVIQATIYGTILLILSCLVLYYLVILLTLWIIIIGFIVYVGIYTVSKRLTIHATVLGGISGAIPPVAGYTAVVNILDYNALALFLILFFWQIPHSYAIAMLYIDDYKKVKLPMLPIVKGIAYTKKIMLFYLALFVVSCALPAVLGSADLFSFIVCMLVALFWMYKSIQSYRTDTDRVFAKTVFKFSIIVITVICLTMG</sequence>
<comment type="function">
    <text evidence="1">Converts heme B (protoheme IX) to heme O by substitution of the vinyl group on carbon 2 of heme B porphyrin ring with a hydroxyethyl farnesyl side group.</text>
</comment>
<comment type="catalytic activity">
    <reaction evidence="1">
        <text>heme b + (2E,6E)-farnesyl diphosphate + H2O = Fe(II)-heme o + diphosphate</text>
        <dbReference type="Rhea" id="RHEA:28070"/>
        <dbReference type="ChEBI" id="CHEBI:15377"/>
        <dbReference type="ChEBI" id="CHEBI:33019"/>
        <dbReference type="ChEBI" id="CHEBI:60344"/>
        <dbReference type="ChEBI" id="CHEBI:60530"/>
        <dbReference type="ChEBI" id="CHEBI:175763"/>
        <dbReference type="EC" id="2.5.1.141"/>
    </reaction>
</comment>
<comment type="pathway">
    <text evidence="1">Porphyrin-containing compound metabolism; heme O biosynthesis; heme O from protoheme: step 1/1.</text>
</comment>
<comment type="subcellular location">
    <subcellularLocation>
        <location evidence="1">Cell inner membrane</location>
        <topology evidence="1">Multi-pass membrane protein</topology>
    </subcellularLocation>
</comment>
<comment type="miscellaneous">
    <text evidence="1">Carbon 2 of the heme B porphyrin ring is defined according to the Fischer nomenclature.</text>
</comment>
<comment type="similarity">
    <text evidence="1">Belongs to the UbiA prenyltransferase family. Protoheme IX farnesyltransferase subfamily.</text>
</comment>
<evidence type="ECO:0000255" key="1">
    <source>
        <dbReference type="HAMAP-Rule" id="MF_00154"/>
    </source>
</evidence>
<gene>
    <name evidence="1" type="primary">cyoE</name>
    <name type="ordered locus">FTF0285</name>
</gene>
<protein>
    <recommendedName>
        <fullName evidence="1">Protoheme IX farnesyltransferase</fullName>
        <ecNumber evidence="1">2.5.1.141</ecNumber>
    </recommendedName>
    <alternativeName>
        <fullName evidence="1">Heme B farnesyltransferase</fullName>
    </alternativeName>
    <alternativeName>
        <fullName evidence="1">Heme O synthase</fullName>
    </alternativeName>
</protein>
<organism>
    <name type="scientific">Francisella tularensis subsp. tularensis (strain FSC 198)</name>
    <dbReference type="NCBI Taxonomy" id="393115"/>
    <lineage>
        <taxon>Bacteria</taxon>
        <taxon>Pseudomonadati</taxon>
        <taxon>Pseudomonadota</taxon>
        <taxon>Gammaproteobacteria</taxon>
        <taxon>Thiotrichales</taxon>
        <taxon>Francisellaceae</taxon>
        <taxon>Francisella</taxon>
    </lineage>
</organism>
<proteinExistence type="inferred from homology"/>